<gene>
    <name type="primary">ddx6</name>
    <name type="synonym">p54h</name>
</gene>
<comment type="function">
    <text evidence="8">ATP-dependent RNA helicase that is an integral component of messenger ribonucleoprotein complexes (mRNPs), storage particles that mask maternal mRNAs from the translational apparatus during oocyte maturation.</text>
</comment>
<comment type="catalytic activity">
    <reaction evidence="1">
        <text>ATP + H2O = ADP + phosphate + H(+)</text>
        <dbReference type="Rhea" id="RHEA:13065"/>
        <dbReference type="ChEBI" id="CHEBI:15377"/>
        <dbReference type="ChEBI" id="CHEBI:15378"/>
        <dbReference type="ChEBI" id="CHEBI:30616"/>
        <dbReference type="ChEBI" id="CHEBI:43474"/>
        <dbReference type="ChEBI" id="CHEBI:456216"/>
        <dbReference type="EC" id="3.6.4.13"/>
    </reaction>
</comment>
<comment type="subunit">
    <text evidence="5 6 7 8">Component of a ribonucleoprotein (RNP) complex, composed at least of cpeb1, lsm14b/rap55b, ddx6/Xp54, ybx2/frgy2, pat1/P100, eif4enif1/4E-T and eif4e1b. Component of a ribonucleoprotein (RNP) complex, composed at least of elavl1/elrA and/or elavl2/elrB, igf2bp3/vg1RBP, ddx6/Xp54, ybx2/frgy2, lsm14b/rap55b and, in a subset of RNP complexes, stau1/staufen. Component of a ribonucleoprotein (RNP) complex, composed at least of lsm14a/rap55a, ybx2/frgy2, ddx6/Xp54 and eif4enif1/4E-T. Interacts with lsm14a/rap55a.</text>
</comment>
<comment type="subcellular location">
    <subcellularLocation>
        <location evidence="1">Cytoplasm</location>
        <location evidence="1">P-body</location>
    </subcellularLocation>
    <subcellularLocation>
        <location evidence="1">Cytoplasm</location>
    </subcellularLocation>
    <subcellularLocation>
        <location evidence="1">Nucleus</location>
    </subcellularLocation>
    <text evidence="1">Mostly cytoplasmic. Upon cellular stress, relocalizes to stress granules.</text>
</comment>
<comment type="tissue specificity">
    <text evidence="8">In adults, expression is restricted to the germline cells of the ovary.</text>
</comment>
<comment type="developmental stage">
    <text evidence="6 8">Expressed maternally. Expression peaks at stage I of oogenesis and remains fairly constant through to the end of oogenesis and, after fertilization, up to blastula. From blastula, through gastrula and neurula, expression declines significantly. May also be expressed zygotically since a low level of expression is detected up to the free-feeding tadpole stage (embryonic stage 42) (at protein level).</text>
</comment>
<comment type="similarity">
    <text evidence="9">Belongs to the DEAD box helicase family. DDX6/DHH1 subfamily.</text>
</comment>
<accession>P54824</accession>
<accession>B7ZRN4</accession>
<protein>
    <recommendedName>
        <fullName>ATP-dependent RNA helicase ddx6</fullName>
        <ecNumber evidence="1">3.6.4.13</ecNumber>
    </recommendedName>
    <alternativeName>
        <fullName>ATP-dependent RNA helicase p54</fullName>
        <shortName>P54H</shortName>
        <shortName>Xp54</shortName>
    </alternativeName>
    <alternativeName>
        <fullName>DEAD box protein 6</fullName>
    </alternativeName>
</protein>
<feature type="chain" id="PRO_0000054985" description="ATP-dependent RNA helicase ddx6">
    <location>
        <begin position="1"/>
        <end position="481"/>
    </location>
</feature>
<feature type="domain" description="Helicase ATP-binding" evidence="2">
    <location>
        <begin position="126"/>
        <end position="297"/>
    </location>
</feature>
<feature type="domain" description="Helicase C-terminal" evidence="3">
    <location>
        <begin position="307"/>
        <end position="467"/>
    </location>
</feature>
<feature type="region of interest" description="Disordered" evidence="4">
    <location>
        <begin position="1"/>
        <end position="41"/>
    </location>
</feature>
<feature type="short sequence motif" description="Q motif">
    <location>
        <begin position="95"/>
        <end position="123"/>
    </location>
</feature>
<feature type="short sequence motif" description="DEAD box">
    <location>
        <begin position="245"/>
        <end position="248"/>
    </location>
</feature>
<feature type="binding site" evidence="2">
    <location>
        <begin position="139"/>
        <end position="146"/>
    </location>
    <ligand>
        <name>ATP</name>
        <dbReference type="ChEBI" id="CHEBI:30616"/>
    </ligand>
</feature>
<feature type="sequence conflict" description="In Ref. 1; CAA63149." evidence="9" ref="1">
    <original>S</original>
    <variation>T</variation>
    <location>
        <position position="146"/>
    </location>
</feature>
<reference key="1">
    <citation type="journal article" date="1997" name="Nucleic Acids Res.">
        <title>Xp54, the Xenopus homologue of human RNA helicase p54, is an integral component of stored mRNP particles in oocytes.</title>
        <authorList>
            <person name="Ladomery M.R."/>
            <person name="Wade E."/>
            <person name="Sommerville J."/>
        </authorList>
    </citation>
    <scope>NUCLEOTIDE SEQUENCE [MRNA]</scope>
    <scope>PROTEIN SEQUENCE OF 114-122 AND 368-377</scope>
    <scope>FUNCTION</scope>
    <scope>SUBCELLULAR LOCATION</scope>
    <scope>IDENTIFICATION IN A RIBONUCLEOPROTEIN COMPLEX WITH YBX2</scope>
    <scope>TISSUE SPECIFICITY</scope>
    <scope>DEVELOPMENTAL STAGE</scope>
    <source>
        <tissue>Oocyte</tissue>
    </source>
</reference>
<reference key="2">
    <citation type="submission" date="2008-11" db="EMBL/GenBank/DDBJ databases">
        <authorList>
            <consortium name="NIH - Xenopus Gene Collection (XGC) project"/>
        </authorList>
    </citation>
    <scope>NUCLEOTIDE SEQUENCE [LARGE SCALE MRNA]</scope>
</reference>
<reference key="3">
    <citation type="journal article" date="2006" name="J. Biol. Chem.">
        <title>RAP55, a cytoplasmic mRNP component, represses translation in Xenopus oocytes.</title>
        <authorList>
            <person name="Tanaka K.J."/>
            <person name="Ogawa K."/>
            <person name="Takagi M."/>
            <person name="Imamoto N."/>
            <person name="Matsumoto K."/>
            <person name="Tsujimoto M."/>
        </authorList>
    </citation>
    <scope>IDENTIFICATION IN A RIBONUCLEOPROTEIN COMPLEX WITH LSM14A; YBX2 AND EIF4ENIF1</scope>
    <scope>INTERACTION WITH LSM14A</scope>
</reference>
<reference key="4">
    <citation type="journal article" date="2007" name="J. Biol. Chem.">
        <title>CPEB interacts with an ovary-specific eIF4E and 4E-T in early Xenopus oocytes.</title>
        <authorList>
            <person name="Minshall N."/>
            <person name="Reiter M.H."/>
            <person name="Weil D."/>
            <person name="Standart N."/>
        </authorList>
    </citation>
    <scope>IDENTIFICATION IN A RIBONUCLEOPROTEIN COMPLEX WITH CPEB1; PAT1; LSM14B; EIF4ENIF1; EIF4E1B AND YBX2</scope>
    <scope>DEVELOPMENTAL STAGE</scope>
</reference>
<reference key="5">
    <citation type="journal article" date="2009" name="J. Biol. Chem.">
        <title>Participation of Xenopus Elr-type proteins in vegetal mRNA localization during oogenesis.</title>
        <authorList>
            <person name="Arthur P.K."/>
            <person name="Claussen M."/>
            <person name="Koch S."/>
            <person name="Tarbashevich K."/>
            <person name="Jahn O."/>
            <person name="Pieler T."/>
        </authorList>
    </citation>
    <scope>IDENTIFICATION IN A RIBONUCLEOPROTEIN COMPLEX WITH ELAVL1; ELAVL2; IGF2BP3; STAU1; LSM14B AND YBX2</scope>
</reference>
<evidence type="ECO:0000250" key="1">
    <source>
        <dbReference type="UniProtKB" id="P26196"/>
    </source>
</evidence>
<evidence type="ECO:0000255" key="2">
    <source>
        <dbReference type="PROSITE-ProRule" id="PRU00541"/>
    </source>
</evidence>
<evidence type="ECO:0000255" key="3">
    <source>
        <dbReference type="PROSITE-ProRule" id="PRU00542"/>
    </source>
</evidence>
<evidence type="ECO:0000256" key="4">
    <source>
        <dbReference type="SAM" id="MobiDB-lite"/>
    </source>
</evidence>
<evidence type="ECO:0000269" key="5">
    <source>
    </source>
</evidence>
<evidence type="ECO:0000269" key="6">
    <source>
    </source>
</evidence>
<evidence type="ECO:0000269" key="7">
    <source>
    </source>
</evidence>
<evidence type="ECO:0000269" key="8">
    <source>
    </source>
</evidence>
<evidence type="ECO:0000305" key="9"/>
<keyword id="KW-0067">ATP-binding</keyword>
<keyword id="KW-0963">Cytoplasm</keyword>
<keyword id="KW-0217">Developmental protein</keyword>
<keyword id="KW-0903">Direct protein sequencing</keyword>
<keyword id="KW-0347">Helicase</keyword>
<keyword id="KW-0378">Hydrolase</keyword>
<keyword id="KW-0547">Nucleotide-binding</keyword>
<keyword id="KW-0539">Nucleus</keyword>
<keyword id="KW-1185">Reference proteome</keyword>
<keyword id="KW-0687">Ribonucleoprotein</keyword>
<keyword id="KW-0694">RNA-binding</keyword>
<name>DDX6_XENLA</name>
<proteinExistence type="evidence at protein level"/>
<sequence>MSTARTENPVLMGMSSQNGQLRGPLKPSAGPGGGGTQTQQINQLKNASTINSGSQQQAQSMSSIIKPGDDWKKTLKLPPKDLRIKTSDVTSTKGNEFEDYCLKRELLMGIFEMGWEKPSPIQEESIPIALSGRDILARAKNGTGKSGAYLIPLLERLDLKKDCIQAMVIVPTRELALQVSQICIQVSKHMGGAKVMATTGGTNLRDDIMRLDDTVHVVIATPGRILDLIKKGVAKVDHIQMIVLDEADKLLSQDFMQIMEDIIMTLPKNRQILLYSATFPLSVQKFMTLHLQKPYEINLMEELTLKGVTQYYAYVTERQKVHCLNTLFSRLQINQSIIFCNSSQRVELLAKKISQLGYSCFYIHAKMRQEHRNRVFHDFRNGLCRNLVCTDLFTRGIDIQAVNVVINFDFPKLAETYLHRIGRSGRFGHLGLAINLITYDDRFNLKSIEEQLGTEIKPIPSSIDKNLYVAEYHSESGEDKP</sequence>
<dbReference type="EC" id="3.6.4.13" evidence="1"/>
<dbReference type="EMBL" id="X92421">
    <property type="protein sequence ID" value="CAA63149.1"/>
    <property type="molecule type" value="mRNA"/>
</dbReference>
<dbReference type="EMBL" id="BC170228">
    <property type="protein sequence ID" value="AAI70228.1"/>
    <property type="molecule type" value="mRNA"/>
</dbReference>
<dbReference type="EMBL" id="BC170230">
    <property type="protein sequence ID" value="AAI70230.1"/>
    <property type="molecule type" value="mRNA"/>
</dbReference>
<dbReference type="RefSeq" id="NP_001083721.1">
    <property type="nucleotide sequence ID" value="NM_001090252.1"/>
</dbReference>
<dbReference type="RefSeq" id="XP_018079874.1">
    <property type="nucleotide sequence ID" value="XM_018224385.1"/>
</dbReference>
<dbReference type="RefSeq" id="XP_018079875.1">
    <property type="nucleotide sequence ID" value="XM_018224386.1"/>
</dbReference>
<dbReference type="RefSeq" id="XP_018079876.1">
    <property type="nucleotide sequence ID" value="XM_018224387.1"/>
</dbReference>
<dbReference type="RefSeq" id="XP_018079877.1">
    <property type="nucleotide sequence ID" value="XM_018224388.1"/>
</dbReference>
<dbReference type="RefSeq" id="XP_018079879.1">
    <property type="nucleotide sequence ID" value="XM_018224390.1"/>
</dbReference>
<dbReference type="SMR" id="P54824"/>
<dbReference type="BioGRID" id="100406">
    <property type="interactions" value="3"/>
</dbReference>
<dbReference type="IntAct" id="P54824">
    <property type="interactions" value="3"/>
</dbReference>
<dbReference type="GeneID" id="399080"/>
<dbReference type="KEGG" id="xla:399080"/>
<dbReference type="AGR" id="Xenbase:XB-GENE-922237"/>
<dbReference type="CTD" id="399080"/>
<dbReference type="Xenbase" id="XB-GENE-922237">
    <property type="gene designation" value="ddx6.L"/>
</dbReference>
<dbReference type="OMA" id="PRDHQMI"/>
<dbReference type="OrthoDB" id="10265785at2759"/>
<dbReference type="CD-CODE" id="78E86D56">
    <property type="entry name" value="Mitochondrial cloud"/>
</dbReference>
<dbReference type="Proteomes" id="UP000186698">
    <property type="component" value="Chromosome 7L"/>
</dbReference>
<dbReference type="Bgee" id="399080">
    <property type="expression patterns" value="Expressed in testis and 19 other cell types or tissues"/>
</dbReference>
<dbReference type="GO" id="GO:0005737">
    <property type="term" value="C:cytoplasm"/>
    <property type="evidence" value="ECO:0000314"/>
    <property type="project" value="UniProtKB"/>
</dbReference>
<dbReference type="GO" id="GO:0010494">
    <property type="term" value="C:cytoplasmic stress granule"/>
    <property type="evidence" value="ECO:0000318"/>
    <property type="project" value="GO_Central"/>
</dbReference>
<dbReference type="GO" id="GO:0005634">
    <property type="term" value="C:nucleus"/>
    <property type="evidence" value="ECO:0000314"/>
    <property type="project" value="UniProtKB"/>
</dbReference>
<dbReference type="GO" id="GO:0000932">
    <property type="term" value="C:P-body"/>
    <property type="evidence" value="ECO:0000250"/>
    <property type="project" value="UniProtKB"/>
</dbReference>
<dbReference type="GO" id="GO:1990904">
    <property type="term" value="C:ribonucleoprotein complex"/>
    <property type="evidence" value="ECO:0000353"/>
    <property type="project" value="UniProtKB"/>
</dbReference>
<dbReference type="GO" id="GO:0005524">
    <property type="term" value="F:ATP binding"/>
    <property type="evidence" value="ECO:0007669"/>
    <property type="project" value="UniProtKB-KW"/>
</dbReference>
<dbReference type="GO" id="GO:0016887">
    <property type="term" value="F:ATP hydrolysis activity"/>
    <property type="evidence" value="ECO:0007669"/>
    <property type="project" value="RHEA"/>
</dbReference>
<dbReference type="GO" id="GO:0003729">
    <property type="term" value="F:mRNA binding"/>
    <property type="evidence" value="ECO:0000318"/>
    <property type="project" value="GO_Central"/>
</dbReference>
<dbReference type="GO" id="GO:0003724">
    <property type="term" value="F:RNA helicase activity"/>
    <property type="evidence" value="ECO:0000314"/>
    <property type="project" value="UniProtKB"/>
</dbReference>
<dbReference type="GO" id="GO:0035278">
    <property type="term" value="P:miRNA-mediated gene silencing by inhibition of translation"/>
    <property type="evidence" value="ECO:0000250"/>
    <property type="project" value="UniProtKB"/>
</dbReference>
<dbReference type="GO" id="GO:0017148">
    <property type="term" value="P:negative regulation of translation"/>
    <property type="evidence" value="ECO:0000250"/>
    <property type="project" value="UniProtKB"/>
</dbReference>
<dbReference type="GO" id="GO:0033962">
    <property type="term" value="P:P-body assembly"/>
    <property type="evidence" value="ECO:0000250"/>
    <property type="project" value="UniProtKB"/>
</dbReference>
<dbReference type="GO" id="GO:0034063">
    <property type="term" value="P:stress granule assembly"/>
    <property type="evidence" value="ECO:0000318"/>
    <property type="project" value="GO_Central"/>
</dbReference>
<dbReference type="CDD" id="cd17940">
    <property type="entry name" value="DEADc_DDX6"/>
    <property type="match status" value="1"/>
</dbReference>
<dbReference type="CDD" id="cd18787">
    <property type="entry name" value="SF2_C_DEAD"/>
    <property type="match status" value="1"/>
</dbReference>
<dbReference type="FunFam" id="3.40.50.300:FF:000114">
    <property type="entry name" value="ATP-dependent RNA helicase DDX6"/>
    <property type="match status" value="1"/>
</dbReference>
<dbReference type="FunFam" id="3.40.50.300:FF:000364">
    <property type="entry name" value="ATP-dependent RNA helicase DDX6"/>
    <property type="match status" value="1"/>
</dbReference>
<dbReference type="Gene3D" id="3.40.50.300">
    <property type="entry name" value="P-loop containing nucleotide triphosphate hydrolases"/>
    <property type="match status" value="2"/>
</dbReference>
<dbReference type="InterPro" id="IPR011545">
    <property type="entry name" value="DEAD/DEAH_box_helicase_dom"/>
</dbReference>
<dbReference type="InterPro" id="IPR014001">
    <property type="entry name" value="Helicase_ATP-bd"/>
</dbReference>
<dbReference type="InterPro" id="IPR001650">
    <property type="entry name" value="Helicase_C-like"/>
</dbReference>
<dbReference type="InterPro" id="IPR027417">
    <property type="entry name" value="P-loop_NTPase"/>
</dbReference>
<dbReference type="InterPro" id="IPR000629">
    <property type="entry name" value="RNA-helicase_DEAD-box_CS"/>
</dbReference>
<dbReference type="InterPro" id="IPR014014">
    <property type="entry name" value="RNA_helicase_DEAD_Q_motif"/>
</dbReference>
<dbReference type="PANTHER" id="PTHR47960">
    <property type="entry name" value="DEAD-BOX ATP-DEPENDENT RNA HELICASE 50"/>
    <property type="match status" value="1"/>
</dbReference>
<dbReference type="Pfam" id="PF00270">
    <property type="entry name" value="DEAD"/>
    <property type="match status" value="1"/>
</dbReference>
<dbReference type="Pfam" id="PF00271">
    <property type="entry name" value="Helicase_C"/>
    <property type="match status" value="1"/>
</dbReference>
<dbReference type="SMART" id="SM00487">
    <property type="entry name" value="DEXDc"/>
    <property type="match status" value="1"/>
</dbReference>
<dbReference type="SMART" id="SM00490">
    <property type="entry name" value="HELICc"/>
    <property type="match status" value="1"/>
</dbReference>
<dbReference type="SUPFAM" id="SSF52540">
    <property type="entry name" value="P-loop containing nucleoside triphosphate hydrolases"/>
    <property type="match status" value="1"/>
</dbReference>
<dbReference type="PROSITE" id="PS00039">
    <property type="entry name" value="DEAD_ATP_HELICASE"/>
    <property type="match status" value="1"/>
</dbReference>
<dbReference type="PROSITE" id="PS51192">
    <property type="entry name" value="HELICASE_ATP_BIND_1"/>
    <property type="match status" value="1"/>
</dbReference>
<dbReference type="PROSITE" id="PS51194">
    <property type="entry name" value="HELICASE_CTER"/>
    <property type="match status" value="1"/>
</dbReference>
<dbReference type="PROSITE" id="PS51195">
    <property type="entry name" value="Q_MOTIF"/>
    <property type="match status" value="1"/>
</dbReference>
<organism>
    <name type="scientific">Xenopus laevis</name>
    <name type="common">African clawed frog</name>
    <dbReference type="NCBI Taxonomy" id="8355"/>
    <lineage>
        <taxon>Eukaryota</taxon>
        <taxon>Metazoa</taxon>
        <taxon>Chordata</taxon>
        <taxon>Craniata</taxon>
        <taxon>Vertebrata</taxon>
        <taxon>Euteleostomi</taxon>
        <taxon>Amphibia</taxon>
        <taxon>Batrachia</taxon>
        <taxon>Anura</taxon>
        <taxon>Pipoidea</taxon>
        <taxon>Pipidae</taxon>
        <taxon>Xenopodinae</taxon>
        <taxon>Xenopus</taxon>
        <taxon>Xenopus</taxon>
    </lineage>
</organism>